<keyword id="KW-0119">Carbohydrate metabolism</keyword>
<keyword id="KW-0456">Lyase</keyword>
<keyword id="KW-1185">Reference proteome</keyword>
<protein>
    <recommendedName>
        <fullName evidence="1">N-acetylmuramic acid 6-phosphate etherase</fullName>
        <shortName evidence="1">MurNAc-6-P etherase</shortName>
        <ecNumber evidence="1">4.2.1.126</ecNumber>
    </recommendedName>
    <alternativeName>
        <fullName evidence="1">N-acetylmuramic acid 6-phosphate hydrolase</fullName>
    </alternativeName>
    <alternativeName>
        <fullName evidence="1">N-acetylmuramic acid 6-phosphate lyase</fullName>
    </alternativeName>
</protein>
<proteinExistence type="inferred from homology"/>
<evidence type="ECO:0000255" key="1">
    <source>
        <dbReference type="HAMAP-Rule" id="MF_00068"/>
    </source>
</evidence>
<organism>
    <name type="scientific">Staphylococcus saprophyticus subsp. saprophyticus (strain ATCC 15305 / DSM 20229 / NCIMB 8711 / NCTC 7292 / S-41)</name>
    <dbReference type="NCBI Taxonomy" id="342451"/>
    <lineage>
        <taxon>Bacteria</taxon>
        <taxon>Bacillati</taxon>
        <taxon>Bacillota</taxon>
        <taxon>Bacilli</taxon>
        <taxon>Bacillales</taxon>
        <taxon>Staphylococcaceae</taxon>
        <taxon>Staphylococcus</taxon>
    </lineage>
</organism>
<comment type="function">
    <text evidence="1">Specifically catalyzes the cleavage of the D-lactyl ether substituent of MurNAc 6-phosphate, producing GlcNAc 6-phosphate and D-lactate.</text>
</comment>
<comment type="catalytic activity">
    <reaction evidence="1">
        <text>N-acetyl-D-muramate 6-phosphate + H2O = N-acetyl-D-glucosamine 6-phosphate + (R)-lactate</text>
        <dbReference type="Rhea" id="RHEA:26410"/>
        <dbReference type="ChEBI" id="CHEBI:15377"/>
        <dbReference type="ChEBI" id="CHEBI:16004"/>
        <dbReference type="ChEBI" id="CHEBI:57513"/>
        <dbReference type="ChEBI" id="CHEBI:58722"/>
        <dbReference type="EC" id="4.2.1.126"/>
    </reaction>
</comment>
<comment type="pathway">
    <text evidence="1">Amino-sugar metabolism; N-acetylmuramate degradation.</text>
</comment>
<comment type="subunit">
    <text evidence="1">Homodimer.</text>
</comment>
<comment type="miscellaneous">
    <text evidence="1">A lyase-type mechanism (elimination/hydration) is suggested for the cleavage of the lactyl ether bond of MurNAc 6-phosphate, with the formation of an alpha,beta-unsaturated aldehyde intermediate with (E)-stereochemistry, followed by the syn addition of water to give product.</text>
</comment>
<comment type="similarity">
    <text evidence="1">Belongs to the GCKR-like family. MurNAc-6-P etherase subfamily.</text>
</comment>
<accession>Q49ZN6</accession>
<feature type="chain" id="PRO_0000249665" description="N-acetylmuramic acid 6-phosphate etherase">
    <location>
        <begin position="1"/>
        <end position="295"/>
    </location>
</feature>
<feature type="domain" description="SIS" evidence="1">
    <location>
        <begin position="53"/>
        <end position="216"/>
    </location>
</feature>
<feature type="active site" description="Proton donor" evidence="1">
    <location>
        <position position="81"/>
    </location>
</feature>
<feature type="active site" evidence="1">
    <location>
        <position position="112"/>
    </location>
</feature>
<dbReference type="EC" id="4.2.1.126" evidence="1"/>
<dbReference type="EMBL" id="AP008934">
    <property type="protein sequence ID" value="BAE17740.1"/>
    <property type="molecule type" value="Genomic_DNA"/>
</dbReference>
<dbReference type="RefSeq" id="WP_011302540.1">
    <property type="nucleotide sequence ID" value="NZ_MTGA01000036.1"/>
</dbReference>
<dbReference type="SMR" id="Q49ZN6"/>
<dbReference type="GeneID" id="3616089"/>
<dbReference type="KEGG" id="ssp:SSP0595"/>
<dbReference type="PATRIC" id="fig|342451.11.peg.600"/>
<dbReference type="eggNOG" id="COG2103">
    <property type="taxonomic scope" value="Bacteria"/>
</dbReference>
<dbReference type="HOGENOM" id="CLU_049049_1_1_9"/>
<dbReference type="OrthoDB" id="9813395at2"/>
<dbReference type="UniPathway" id="UPA00342"/>
<dbReference type="Proteomes" id="UP000006371">
    <property type="component" value="Chromosome"/>
</dbReference>
<dbReference type="GO" id="GO:0097367">
    <property type="term" value="F:carbohydrate derivative binding"/>
    <property type="evidence" value="ECO:0007669"/>
    <property type="project" value="InterPro"/>
</dbReference>
<dbReference type="GO" id="GO:0016835">
    <property type="term" value="F:carbon-oxygen lyase activity"/>
    <property type="evidence" value="ECO:0007669"/>
    <property type="project" value="UniProtKB-UniRule"/>
</dbReference>
<dbReference type="GO" id="GO:0016803">
    <property type="term" value="F:ether hydrolase activity"/>
    <property type="evidence" value="ECO:0007669"/>
    <property type="project" value="TreeGrafter"/>
</dbReference>
<dbReference type="GO" id="GO:0046348">
    <property type="term" value="P:amino sugar catabolic process"/>
    <property type="evidence" value="ECO:0007669"/>
    <property type="project" value="InterPro"/>
</dbReference>
<dbReference type="GO" id="GO:0097173">
    <property type="term" value="P:N-acetylmuramic acid catabolic process"/>
    <property type="evidence" value="ECO:0007669"/>
    <property type="project" value="UniProtKB-UniPathway"/>
</dbReference>
<dbReference type="GO" id="GO:0009254">
    <property type="term" value="P:peptidoglycan turnover"/>
    <property type="evidence" value="ECO:0007669"/>
    <property type="project" value="TreeGrafter"/>
</dbReference>
<dbReference type="CDD" id="cd05007">
    <property type="entry name" value="SIS_Etherase"/>
    <property type="match status" value="1"/>
</dbReference>
<dbReference type="FunFam" id="1.10.8.1080:FF:000001">
    <property type="entry name" value="N-acetylmuramic acid 6-phosphate etherase"/>
    <property type="match status" value="1"/>
</dbReference>
<dbReference type="FunFam" id="3.40.50.10490:FF:000014">
    <property type="entry name" value="N-acetylmuramic acid 6-phosphate etherase"/>
    <property type="match status" value="1"/>
</dbReference>
<dbReference type="Gene3D" id="1.10.8.1080">
    <property type="match status" value="1"/>
</dbReference>
<dbReference type="Gene3D" id="3.40.50.10490">
    <property type="entry name" value="Glucose-6-phosphate isomerase like protein, domain 1"/>
    <property type="match status" value="1"/>
</dbReference>
<dbReference type="HAMAP" id="MF_00068">
    <property type="entry name" value="MurQ"/>
    <property type="match status" value="1"/>
</dbReference>
<dbReference type="InterPro" id="IPR005488">
    <property type="entry name" value="Etherase_MurQ"/>
</dbReference>
<dbReference type="InterPro" id="IPR005486">
    <property type="entry name" value="Glucokinase_regulatory_CS"/>
</dbReference>
<dbReference type="InterPro" id="IPR040190">
    <property type="entry name" value="MURQ/GCKR"/>
</dbReference>
<dbReference type="InterPro" id="IPR001347">
    <property type="entry name" value="SIS_dom"/>
</dbReference>
<dbReference type="InterPro" id="IPR046348">
    <property type="entry name" value="SIS_dom_sf"/>
</dbReference>
<dbReference type="NCBIfam" id="TIGR00274">
    <property type="entry name" value="N-acetylmuramic acid 6-phosphate etherase"/>
    <property type="match status" value="1"/>
</dbReference>
<dbReference type="NCBIfam" id="NF003915">
    <property type="entry name" value="PRK05441.1"/>
    <property type="match status" value="1"/>
</dbReference>
<dbReference type="NCBIfam" id="NF009222">
    <property type="entry name" value="PRK12570.1"/>
    <property type="match status" value="1"/>
</dbReference>
<dbReference type="PANTHER" id="PTHR10088">
    <property type="entry name" value="GLUCOKINASE REGULATORY PROTEIN"/>
    <property type="match status" value="1"/>
</dbReference>
<dbReference type="PANTHER" id="PTHR10088:SF4">
    <property type="entry name" value="GLUCOKINASE REGULATORY PROTEIN"/>
    <property type="match status" value="1"/>
</dbReference>
<dbReference type="Pfam" id="PF22645">
    <property type="entry name" value="GKRP_SIS_N"/>
    <property type="match status" value="1"/>
</dbReference>
<dbReference type="SUPFAM" id="SSF53697">
    <property type="entry name" value="SIS domain"/>
    <property type="match status" value="1"/>
</dbReference>
<dbReference type="PROSITE" id="PS01272">
    <property type="entry name" value="GCKR"/>
    <property type="match status" value="1"/>
</dbReference>
<dbReference type="PROSITE" id="PS51464">
    <property type="entry name" value="SIS"/>
    <property type="match status" value="1"/>
</dbReference>
<reference key="1">
    <citation type="journal article" date="2005" name="Proc. Natl. Acad. Sci. U.S.A.">
        <title>Whole genome sequence of Staphylococcus saprophyticus reveals the pathogenesis of uncomplicated urinary tract infection.</title>
        <authorList>
            <person name="Kuroda M."/>
            <person name="Yamashita A."/>
            <person name="Hirakawa H."/>
            <person name="Kumano M."/>
            <person name="Morikawa K."/>
            <person name="Higashide M."/>
            <person name="Maruyama A."/>
            <person name="Inose Y."/>
            <person name="Matoba K."/>
            <person name="Toh H."/>
            <person name="Kuhara S."/>
            <person name="Hattori M."/>
            <person name="Ohta T."/>
        </authorList>
    </citation>
    <scope>NUCLEOTIDE SEQUENCE [LARGE SCALE GENOMIC DNA]</scope>
    <source>
        <strain>ATCC 15305 / DSM 20229 / NCIMB 8711 / NCTC 7292 / S-41</strain>
    </source>
</reference>
<gene>
    <name evidence="1" type="primary">murQ</name>
    <name type="ordered locus">SSP0595</name>
</gene>
<sequence length="295" mass="31920">MNNSMTEARNEATMHLDEMSIIQALETMNAEDQKVPQQIHDILPKLAEVIKVTTEQFKQGGRIIYIGAGTSGRLGVLDAAECVPTFNTSTNEVIGLIAGGQRAMTVAVEGAEDSESLAREDLKHIHLNEKDVVIGIAASGSTPYVMGGLKCATEIGAHTVAISCNTNTKISDLAQYPIEVNVGPEVLTGSTRLKSGTAQKLILNMISTITMVGVGKVYDNLMVDVKATNQKLIDRSIRIIQDICDISYNQAQSLYESADQNLKVAVVMHLCDINKSEAVTRLNDNNHIIKKAIQN</sequence>
<name>MURQ_STAS1</name>